<gene>
    <name evidence="1" type="primary">queC</name>
    <name type="ordered locus">BLi01527</name>
    <name type="ordered locus">BL03546</name>
</gene>
<comment type="function">
    <text evidence="1">Catalyzes the ATP-dependent conversion of 7-carboxy-7-deazaguanine (CDG) to 7-cyano-7-deazaguanine (preQ(0)).</text>
</comment>
<comment type="catalytic activity">
    <reaction evidence="1">
        <text>7-carboxy-7-deazaguanine + NH4(+) + ATP = 7-cyano-7-deazaguanine + ADP + phosphate + H2O + H(+)</text>
        <dbReference type="Rhea" id="RHEA:27982"/>
        <dbReference type="ChEBI" id="CHEBI:15377"/>
        <dbReference type="ChEBI" id="CHEBI:15378"/>
        <dbReference type="ChEBI" id="CHEBI:28938"/>
        <dbReference type="ChEBI" id="CHEBI:30616"/>
        <dbReference type="ChEBI" id="CHEBI:43474"/>
        <dbReference type="ChEBI" id="CHEBI:45075"/>
        <dbReference type="ChEBI" id="CHEBI:61036"/>
        <dbReference type="ChEBI" id="CHEBI:456216"/>
        <dbReference type="EC" id="6.3.4.20"/>
    </reaction>
</comment>
<comment type="cofactor">
    <cofactor evidence="1">
        <name>Zn(2+)</name>
        <dbReference type="ChEBI" id="CHEBI:29105"/>
    </cofactor>
    <text evidence="1">Binds 1 zinc ion per subunit.</text>
</comment>
<comment type="pathway">
    <text evidence="1">Purine metabolism; 7-cyano-7-deazaguanine biosynthesis.</text>
</comment>
<comment type="subunit">
    <text evidence="1">Homodimer.</text>
</comment>
<comment type="similarity">
    <text evidence="1">Belongs to the QueC family.</text>
</comment>
<organism>
    <name type="scientific">Bacillus licheniformis (strain ATCC 14580 / DSM 13 / JCM 2505 / CCUG 7422 / NBRC 12200 / NCIMB 9375 / NCTC 10341 / NRRL NRS-1264 / Gibson 46)</name>
    <dbReference type="NCBI Taxonomy" id="279010"/>
    <lineage>
        <taxon>Bacteria</taxon>
        <taxon>Bacillati</taxon>
        <taxon>Bacillota</taxon>
        <taxon>Bacilli</taxon>
        <taxon>Bacillales</taxon>
        <taxon>Bacillaceae</taxon>
        <taxon>Bacillus</taxon>
    </lineage>
</organism>
<name>QUEC_BACLD</name>
<keyword id="KW-0067">ATP-binding</keyword>
<keyword id="KW-0436">Ligase</keyword>
<keyword id="KW-0479">Metal-binding</keyword>
<keyword id="KW-0547">Nucleotide-binding</keyword>
<keyword id="KW-0671">Queuosine biosynthesis</keyword>
<keyword id="KW-1185">Reference proteome</keyword>
<keyword id="KW-0862">Zinc</keyword>
<evidence type="ECO:0000255" key="1">
    <source>
        <dbReference type="HAMAP-Rule" id="MF_01633"/>
    </source>
</evidence>
<reference key="1">
    <citation type="journal article" date="2004" name="J. Mol. Microbiol. Biotechnol.">
        <title>The complete genome sequence of Bacillus licheniformis DSM13, an organism with great industrial potential.</title>
        <authorList>
            <person name="Veith B."/>
            <person name="Herzberg C."/>
            <person name="Steckel S."/>
            <person name="Feesche J."/>
            <person name="Maurer K.H."/>
            <person name="Ehrenreich P."/>
            <person name="Baeumer S."/>
            <person name="Henne A."/>
            <person name="Liesegang H."/>
            <person name="Merkl R."/>
            <person name="Ehrenreich A."/>
            <person name="Gottschalk G."/>
        </authorList>
    </citation>
    <scope>NUCLEOTIDE SEQUENCE [LARGE SCALE GENOMIC DNA]</scope>
    <source>
        <strain>ATCC 14580 / DSM 13 / JCM 2505 / CCUG 7422 / NBRC 12200 / NCIMB 9375 / NCTC 10341 / NRRL NRS-1264 / Gibson 46</strain>
    </source>
</reference>
<reference key="2">
    <citation type="journal article" date="2004" name="Genome Biol.">
        <title>Complete genome sequence of the industrial bacterium Bacillus licheniformis and comparisons with closely related Bacillus species.</title>
        <authorList>
            <person name="Rey M.W."/>
            <person name="Ramaiya P."/>
            <person name="Nelson B.A."/>
            <person name="Brody-Karpin S.D."/>
            <person name="Zaretsky E.J."/>
            <person name="Tang M."/>
            <person name="Lopez de Leon A."/>
            <person name="Xiang H."/>
            <person name="Gusti V."/>
            <person name="Clausen I.G."/>
            <person name="Olsen P.B."/>
            <person name="Rasmussen M.D."/>
            <person name="Andersen J.T."/>
            <person name="Joergensen P.L."/>
            <person name="Larsen T.S."/>
            <person name="Sorokin A."/>
            <person name="Bolotin A."/>
            <person name="Lapidus A."/>
            <person name="Galleron N."/>
            <person name="Ehrlich S.D."/>
            <person name="Berka R.M."/>
        </authorList>
    </citation>
    <scope>NUCLEOTIDE SEQUENCE [LARGE SCALE GENOMIC DNA]</scope>
    <source>
        <strain>ATCC 14580 / DSM 13 / JCM 2505 / CCUG 7422 / NBRC 12200 / NCIMB 9375 / NCTC 10341 / NRRL NRS-1264 / Gibson 46</strain>
    </source>
</reference>
<sequence>MKQEKAIVVFSGGQDSTTCLLWALRQFQEVEAVTFQYNQRHKQEIEVAKKIAAKLGVKHHLLDMELLNQLAPNALTRDDIEIEAKEGELPSTFVPGRNLVFLSFASILAYQVGARHIITGVCETDFSGYPDCRDEFVKSCNVTVNLAMERPFVIHTPLMWLNKAETWELADELDALDFVKNETLTCYNGIIADGCGECPACKLRANGYNEYMKMKKERA</sequence>
<proteinExistence type="inferred from homology"/>
<accession>Q65KI6</accession>
<accession>Q62VY4</accession>
<protein>
    <recommendedName>
        <fullName evidence="1">7-cyano-7-deazaguanine synthase</fullName>
        <ecNumber evidence="1">6.3.4.20</ecNumber>
    </recommendedName>
    <alternativeName>
        <fullName evidence="1">7-cyano-7-carbaguanine synthase</fullName>
    </alternativeName>
    <alternativeName>
        <fullName evidence="1">PreQ(0) synthase</fullName>
    </alternativeName>
    <alternativeName>
        <fullName evidence="1">Queuosine biosynthesis protein QueC</fullName>
    </alternativeName>
</protein>
<dbReference type="EC" id="6.3.4.20" evidence="1"/>
<dbReference type="EMBL" id="AE017333">
    <property type="protein sequence ID" value="AAU40428.1"/>
    <property type="molecule type" value="Genomic_DNA"/>
</dbReference>
<dbReference type="EMBL" id="CP000002">
    <property type="protein sequence ID" value="AAU23074.1"/>
    <property type="molecule type" value="Genomic_DNA"/>
</dbReference>
<dbReference type="RefSeq" id="WP_003181098.1">
    <property type="nucleotide sequence ID" value="NC_006322.1"/>
</dbReference>
<dbReference type="SMR" id="Q65KI6"/>
<dbReference type="STRING" id="279010.BL03546"/>
<dbReference type="GeneID" id="92861882"/>
<dbReference type="KEGG" id="bld:BLi01527"/>
<dbReference type="KEGG" id="bli:BL03546"/>
<dbReference type="eggNOG" id="COG0603">
    <property type="taxonomic scope" value="Bacteria"/>
</dbReference>
<dbReference type="HOGENOM" id="CLU_081854_0_0_9"/>
<dbReference type="UniPathway" id="UPA00391"/>
<dbReference type="Proteomes" id="UP000000606">
    <property type="component" value="Chromosome"/>
</dbReference>
<dbReference type="GO" id="GO:0005524">
    <property type="term" value="F:ATP binding"/>
    <property type="evidence" value="ECO:0007669"/>
    <property type="project" value="UniProtKB-UniRule"/>
</dbReference>
<dbReference type="GO" id="GO:0016879">
    <property type="term" value="F:ligase activity, forming carbon-nitrogen bonds"/>
    <property type="evidence" value="ECO:0007669"/>
    <property type="project" value="UniProtKB-UniRule"/>
</dbReference>
<dbReference type="GO" id="GO:0008270">
    <property type="term" value="F:zinc ion binding"/>
    <property type="evidence" value="ECO:0007669"/>
    <property type="project" value="UniProtKB-UniRule"/>
</dbReference>
<dbReference type="GO" id="GO:0008616">
    <property type="term" value="P:queuosine biosynthetic process"/>
    <property type="evidence" value="ECO:0007669"/>
    <property type="project" value="UniProtKB-UniRule"/>
</dbReference>
<dbReference type="CDD" id="cd01995">
    <property type="entry name" value="QueC-like"/>
    <property type="match status" value="1"/>
</dbReference>
<dbReference type="FunFam" id="3.40.50.620:FF:000017">
    <property type="entry name" value="7-cyano-7-deazaguanine synthase"/>
    <property type="match status" value="1"/>
</dbReference>
<dbReference type="Gene3D" id="3.40.50.620">
    <property type="entry name" value="HUPs"/>
    <property type="match status" value="1"/>
</dbReference>
<dbReference type="HAMAP" id="MF_01633">
    <property type="entry name" value="QueC"/>
    <property type="match status" value="1"/>
</dbReference>
<dbReference type="InterPro" id="IPR018317">
    <property type="entry name" value="QueC"/>
</dbReference>
<dbReference type="InterPro" id="IPR014729">
    <property type="entry name" value="Rossmann-like_a/b/a_fold"/>
</dbReference>
<dbReference type="NCBIfam" id="TIGR00364">
    <property type="entry name" value="7-cyano-7-deazaguanine synthase QueC"/>
    <property type="match status" value="1"/>
</dbReference>
<dbReference type="PANTHER" id="PTHR42914">
    <property type="entry name" value="7-CYANO-7-DEAZAGUANINE SYNTHASE"/>
    <property type="match status" value="1"/>
</dbReference>
<dbReference type="PANTHER" id="PTHR42914:SF1">
    <property type="entry name" value="7-CYANO-7-DEAZAGUANINE SYNTHASE"/>
    <property type="match status" value="1"/>
</dbReference>
<dbReference type="Pfam" id="PF06508">
    <property type="entry name" value="QueC"/>
    <property type="match status" value="1"/>
</dbReference>
<dbReference type="PIRSF" id="PIRSF006293">
    <property type="entry name" value="ExsB"/>
    <property type="match status" value="1"/>
</dbReference>
<dbReference type="SUPFAM" id="SSF52402">
    <property type="entry name" value="Adenine nucleotide alpha hydrolases-like"/>
    <property type="match status" value="1"/>
</dbReference>
<feature type="chain" id="PRO_0000246800" description="7-cyano-7-deazaguanine synthase">
    <location>
        <begin position="1"/>
        <end position="219"/>
    </location>
</feature>
<feature type="binding site" evidence="1">
    <location>
        <begin position="10"/>
        <end position="20"/>
    </location>
    <ligand>
        <name>ATP</name>
        <dbReference type="ChEBI" id="CHEBI:30616"/>
    </ligand>
</feature>
<feature type="binding site" evidence="1">
    <location>
        <position position="186"/>
    </location>
    <ligand>
        <name>Zn(2+)</name>
        <dbReference type="ChEBI" id="CHEBI:29105"/>
    </ligand>
</feature>
<feature type="binding site" evidence="1">
    <location>
        <position position="195"/>
    </location>
    <ligand>
        <name>Zn(2+)</name>
        <dbReference type="ChEBI" id="CHEBI:29105"/>
    </ligand>
</feature>
<feature type="binding site" evidence="1">
    <location>
        <position position="198"/>
    </location>
    <ligand>
        <name>Zn(2+)</name>
        <dbReference type="ChEBI" id="CHEBI:29105"/>
    </ligand>
</feature>
<feature type="binding site" evidence="1">
    <location>
        <position position="201"/>
    </location>
    <ligand>
        <name>Zn(2+)</name>
        <dbReference type="ChEBI" id="CHEBI:29105"/>
    </ligand>
</feature>